<keyword id="KW-0963">Cytoplasm</keyword>
<keyword id="KW-0342">GTP-binding</keyword>
<keyword id="KW-0396">Initiation factor</keyword>
<keyword id="KW-0547">Nucleotide-binding</keyword>
<keyword id="KW-0648">Protein biosynthesis</keyword>
<organism>
    <name type="scientific">Clostridium botulinum (strain Eklund 17B / Type B)</name>
    <dbReference type="NCBI Taxonomy" id="935198"/>
    <lineage>
        <taxon>Bacteria</taxon>
        <taxon>Bacillati</taxon>
        <taxon>Bacillota</taxon>
        <taxon>Clostridia</taxon>
        <taxon>Eubacteriales</taxon>
        <taxon>Clostridiaceae</taxon>
        <taxon>Clostridium</taxon>
    </lineage>
</organism>
<comment type="function">
    <text evidence="2">One of the essential components for the initiation of protein synthesis. Protects formylmethionyl-tRNA from spontaneous hydrolysis and promotes its binding to the 30S ribosomal subunits. Also involved in the hydrolysis of GTP during the formation of the 70S ribosomal complex.</text>
</comment>
<comment type="subcellular location">
    <subcellularLocation>
        <location evidence="2">Cytoplasm</location>
    </subcellularLocation>
</comment>
<comment type="similarity">
    <text evidence="2">Belongs to the TRAFAC class translation factor GTPase superfamily. Classic translation factor GTPase family. IF-2 subfamily.</text>
</comment>
<protein>
    <recommendedName>
        <fullName evidence="2">Translation initiation factor IF-2</fullName>
    </recommendedName>
</protein>
<name>IF2_CLOBB</name>
<sequence>MSKIRVYELAKELNVSSKDLITLLMDEFGVEVKNHMSTIEDEEAQLIKELLATKPEYIEGSLEDSKSLVDEYEEILQNELNKAKKKRKKNKREDKDDENEELETEVIEIGETITVKELAEKLNKPSNDVIRTLIFSGVMAAINQEIDFATAEKVCESYGVILEKLEVTEELEAVEAEDDDEENLTKRPPIVTVMGHVDHGKTSLLDAIRKAKVTDTEAGGITQHIGAYTININGEEITFLDTPGHEAFTAMRARGAQVTDVVILVVAADDGIMPQTKEAINHCKAAGVPMVVAINKIDKPGANPDRVKQELTEHGLVVEEWGGDTICEEVSAKSNLNIEKLLEMVLLTAEMLELKANKERKAKGTVIEAKLDKGRGSVATLLVQNGTLHVGDAIIVGSTYGRIRAMFDDTGKKIKSAGPSIPVEVLGLSEVPEAGDRFNQVKDEKTARIMADKRKDKEKSDSLMSGNRVSLEDLYSQIKEGKVKELGIIVKADVQGSVQAINQSLEKLSTDDVKVRVIHSGVGAITETDITLATASNAIVIGFNVRPDNNAVAQADKENVEIKTYRIIYDAIEDVKSAMIGMLEPEYKEVILGSAEVRETYKISNVGTIAGCYVLNGKLQRNAETRVIRDGIVIFESNLSSLKRFKDDVKEVNTGYECGLTVEKFNDVKEGDILECFMMEAIKRKEL</sequence>
<proteinExistence type="inferred from homology"/>
<feature type="chain" id="PRO_1000093774" description="Translation initiation factor IF-2">
    <location>
        <begin position="1"/>
        <end position="687"/>
    </location>
</feature>
<feature type="domain" description="tr-type G">
    <location>
        <begin position="186"/>
        <end position="355"/>
    </location>
</feature>
<feature type="region of interest" description="G1" evidence="1">
    <location>
        <begin position="195"/>
        <end position="202"/>
    </location>
</feature>
<feature type="region of interest" description="G2" evidence="1">
    <location>
        <begin position="220"/>
        <end position="224"/>
    </location>
</feature>
<feature type="region of interest" description="G3" evidence="1">
    <location>
        <begin position="241"/>
        <end position="244"/>
    </location>
</feature>
<feature type="region of interest" description="G4" evidence="1">
    <location>
        <begin position="295"/>
        <end position="298"/>
    </location>
</feature>
<feature type="region of interest" description="G5" evidence="1">
    <location>
        <begin position="331"/>
        <end position="333"/>
    </location>
</feature>
<feature type="binding site" evidence="2">
    <location>
        <begin position="195"/>
        <end position="202"/>
    </location>
    <ligand>
        <name>GTP</name>
        <dbReference type="ChEBI" id="CHEBI:37565"/>
    </ligand>
</feature>
<feature type="binding site" evidence="2">
    <location>
        <begin position="241"/>
        <end position="245"/>
    </location>
    <ligand>
        <name>GTP</name>
        <dbReference type="ChEBI" id="CHEBI:37565"/>
    </ligand>
</feature>
<feature type="binding site" evidence="2">
    <location>
        <begin position="295"/>
        <end position="298"/>
    </location>
    <ligand>
        <name>GTP</name>
        <dbReference type="ChEBI" id="CHEBI:37565"/>
    </ligand>
</feature>
<gene>
    <name evidence="2" type="primary">infB</name>
    <name type="ordered locus">CLL_A1273</name>
</gene>
<evidence type="ECO:0000250" key="1"/>
<evidence type="ECO:0000255" key="2">
    <source>
        <dbReference type="HAMAP-Rule" id="MF_00100"/>
    </source>
</evidence>
<reference key="1">
    <citation type="submission" date="2008-04" db="EMBL/GenBank/DDBJ databases">
        <title>Complete sequence of Clostridium botulinum strain Eklund.</title>
        <authorList>
            <person name="Brinkac L.M."/>
            <person name="Brown J.L."/>
            <person name="Bruce D."/>
            <person name="Detter C."/>
            <person name="Munk C."/>
            <person name="Smith L.A."/>
            <person name="Smith T.J."/>
            <person name="Sutton G."/>
            <person name="Brettin T.S."/>
        </authorList>
    </citation>
    <scope>NUCLEOTIDE SEQUENCE [LARGE SCALE GENOMIC DNA]</scope>
    <source>
        <strain>Eklund 17B / Type B</strain>
    </source>
</reference>
<dbReference type="EMBL" id="CP001056">
    <property type="protein sequence ID" value="ACD22023.1"/>
    <property type="molecule type" value="Genomic_DNA"/>
</dbReference>
<dbReference type="SMR" id="B2TJ55"/>
<dbReference type="KEGG" id="cbk:CLL_A1273"/>
<dbReference type="PATRIC" id="fig|935198.13.peg.1219"/>
<dbReference type="HOGENOM" id="CLU_006301_5_1_9"/>
<dbReference type="Proteomes" id="UP000001195">
    <property type="component" value="Chromosome"/>
</dbReference>
<dbReference type="GO" id="GO:0005829">
    <property type="term" value="C:cytosol"/>
    <property type="evidence" value="ECO:0007669"/>
    <property type="project" value="TreeGrafter"/>
</dbReference>
<dbReference type="GO" id="GO:0005525">
    <property type="term" value="F:GTP binding"/>
    <property type="evidence" value="ECO:0007669"/>
    <property type="project" value="UniProtKB-KW"/>
</dbReference>
<dbReference type="GO" id="GO:0003924">
    <property type="term" value="F:GTPase activity"/>
    <property type="evidence" value="ECO:0007669"/>
    <property type="project" value="UniProtKB-UniRule"/>
</dbReference>
<dbReference type="GO" id="GO:0003743">
    <property type="term" value="F:translation initiation factor activity"/>
    <property type="evidence" value="ECO:0007669"/>
    <property type="project" value="UniProtKB-UniRule"/>
</dbReference>
<dbReference type="CDD" id="cd01887">
    <property type="entry name" value="IF2_eIF5B"/>
    <property type="match status" value="1"/>
</dbReference>
<dbReference type="CDD" id="cd03702">
    <property type="entry name" value="IF2_mtIF2_II"/>
    <property type="match status" value="1"/>
</dbReference>
<dbReference type="CDD" id="cd03692">
    <property type="entry name" value="mtIF2_IVc"/>
    <property type="match status" value="1"/>
</dbReference>
<dbReference type="FunFam" id="2.40.30.10:FF:000007">
    <property type="entry name" value="Translation initiation factor IF-2"/>
    <property type="match status" value="1"/>
</dbReference>
<dbReference type="FunFam" id="2.40.30.10:FF:000008">
    <property type="entry name" value="Translation initiation factor IF-2"/>
    <property type="match status" value="1"/>
</dbReference>
<dbReference type="FunFam" id="3.40.50.10050:FF:000001">
    <property type="entry name" value="Translation initiation factor IF-2"/>
    <property type="match status" value="1"/>
</dbReference>
<dbReference type="FunFam" id="3.40.50.300:FF:000019">
    <property type="entry name" value="Translation initiation factor IF-2"/>
    <property type="match status" value="1"/>
</dbReference>
<dbReference type="Gene3D" id="1.10.10.2480">
    <property type="match status" value="1"/>
</dbReference>
<dbReference type="Gene3D" id="3.40.50.300">
    <property type="entry name" value="P-loop containing nucleotide triphosphate hydrolases"/>
    <property type="match status" value="1"/>
</dbReference>
<dbReference type="Gene3D" id="2.40.30.10">
    <property type="entry name" value="Translation factors"/>
    <property type="match status" value="2"/>
</dbReference>
<dbReference type="Gene3D" id="3.40.50.10050">
    <property type="entry name" value="Translation initiation factor IF- 2, domain 3"/>
    <property type="match status" value="1"/>
</dbReference>
<dbReference type="HAMAP" id="MF_00100_B">
    <property type="entry name" value="IF_2_B"/>
    <property type="match status" value="1"/>
</dbReference>
<dbReference type="InterPro" id="IPR053905">
    <property type="entry name" value="EF-G-like_DII"/>
</dbReference>
<dbReference type="InterPro" id="IPR044145">
    <property type="entry name" value="IF2_II"/>
</dbReference>
<dbReference type="InterPro" id="IPR006847">
    <property type="entry name" value="IF2_N"/>
</dbReference>
<dbReference type="InterPro" id="IPR027417">
    <property type="entry name" value="P-loop_NTPase"/>
</dbReference>
<dbReference type="InterPro" id="IPR005225">
    <property type="entry name" value="Small_GTP-bd"/>
</dbReference>
<dbReference type="InterPro" id="IPR000795">
    <property type="entry name" value="T_Tr_GTP-bd_dom"/>
</dbReference>
<dbReference type="InterPro" id="IPR000178">
    <property type="entry name" value="TF_IF2_bacterial-like"/>
</dbReference>
<dbReference type="InterPro" id="IPR015760">
    <property type="entry name" value="TIF_IF2"/>
</dbReference>
<dbReference type="InterPro" id="IPR023115">
    <property type="entry name" value="TIF_IF2_dom3"/>
</dbReference>
<dbReference type="InterPro" id="IPR036925">
    <property type="entry name" value="TIF_IF2_dom3_sf"/>
</dbReference>
<dbReference type="InterPro" id="IPR009000">
    <property type="entry name" value="Transl_B-barrel_sf"/>
</dbReference>
<dbReference type="NCBIfam" id="TIGR00487">
    <property type="entry name" value="IF-2"/>
    <property type="match status" value="1"/>
</dbReference>
<dbReference type="NCBIfam" id="TIGR00231">
    <property type="entry name" value="small_GTP"/>
    <property type="match status" value="1"/>
</dbReference>
<dbReference type="PANTHER" id="PTHR43381:SF5">
    <property type="entry name" value="TR-TYPE G DOMAIN-CONTAINING PROTEIN"/>
    <property type="match status" value="1"/>
</dbReference>
<dbReference type="PANTHER" id="PTHR43381">
    <property type="entry name" value="TRANSLATION INITIATION FACTOR IF-2-RELATED"/>
    <property type="match status" value="1"/>
</dbReference>
<dbReference type="Pfam" id="PF22042">
    <property type="entry name" value="EF-G_D2"/>
    <property type="match status" value="1"/>
</dbReference>
<dbReference type="Pfam" id="PF00009">
    <property type="entry name" value="GTP_EFTU"/>
    <property type="match status" value="1"/>
</dbReference>
<dbReference type="Pfam" id="PF11987">
    <property type="entry name" value="IF-2"/>
    <property type="match status" value="1"/>
</dbReference>
<dbReference type="Pfam" id="PF04760">
    <property type="entry name" value="IF2_N"/>
    <property type="match status" value="2"/>
</dbReference>
<dbReference type="SUPFAM" id="SSF52156">
    <property type="entry name" value="Initiation factor IF2/eIF5b, domain 3"/>
    <property type="match status" value="1"/>
</dbReference>
<dbReference type="SUPFAM" id="SSF52540">
    <property type="entry name" value="P-loop containing nucleoside triphosphate hydrolases"/>
    <property type="match status" value="1"/>
</dbReference>
<dbReference type="SUPFAM" id="SSF50447">
    <property type="entry name" value="Translation proteins"/>
    <property type="match status" value="2"/>
</dbReference>
<dbReference type="PROSITE" id="PS51722">
    <property type="entry name" value="G_TR_2"/>
    <property type="match status" value="1"/>
</dbReference>
<dbReference type="PROSITE" id="PS01176">
    <property type="entry name" value="IF2"/>
    <property type="match status" value="1"/>
</dbReference>
<accession>B2TJ55</accession>